<sequence>VSVDCSEYPKPGCMMERLPLCGSDNKTYNDKCNFCNAVVESNGTLTLNHFGEC</sequence>
<evidence type="ECO:0000255" key="1">
    <source>
        <dbReference type="PROSITE-ProRule" id="PRU00798"/>
    </source>
</evidence>
<evidence type="ECO:0000269" key="2">
    <source>
    </source>
</evidence>
<comment type="subcellular location">
    <subcellularLocation>
        <location>Secreted</location>
    </subcellularLocation>
</comment>
<comment type="domain">
    <text>Avian ovomucoid consists of three homologous, tandem Kazal family inhibitory domains.</text>
</comment>
<accession>P05611</accession>
<reference key="1">
    <citation type="journal article" date="1987" name="Biochemistry">
        <title>Ovomucoid third domains from 100 avian species: isolation, sequences, and hypervariability of enzyme-inhibitor contact residues.</title>
        <authorList>
            <person name="Laskowski M. Jr."/>
            <person name="Kato I."/>
            <person name="Ardelt W."/>
            <person name="Cook J."/>
            <person name="Denton A."/>
            <person name="Empie M.W."/>
            <person name="Kohr W.J."/>
            <person name="Park S.J."/>
            <person name="Parks K."/>
            <person name="Schatzley B.L."/>
            <person name="Schoenberger O.L."/>
            <person name="Tashiro M."/>
            <person name="Vichot G."/>
            <person name="Whatley H.E."/>
            <person name="Wieczorek A."/>
            <person name="Wieczorek M."/>
        </authorList>
    </citation>
    <scope>PROTEIN SEQUENCE</scope>
</reference>
<dbReference type="PIR" id="C31437">
    <property type="entry name" value="C31437"/>
</dbReference>
<dbReference type="SMR" id="P05611"/>
<dbReference type="iPTMnet" id="P05611"/>
<dbReference type="GO" id="GO:0005576">
    <property type="term" value="C:extracellular region"/>
    <property type="evidence" value="ECO:0007669"/>
    <property type="project" value="UniProtKB-SubCell"/>
</dbReference>
<dbReference type="GO" id="GO:0004867">
    <property type="term" value="F:serine-type endopeptidase inhibitor activity"/>
    <property type="evidence" value="ECO:0007669"/>
    <property type="project" value="UniProtKB-KW"/>
</dbReference>
<dbReference type="CDD" id="cd00104">
    <property type="entry name" value="KAZAL_FS"/>
    <property type="match status" value="1"/>
</dbReference>
<dbReference type="FunFam" id="3.30.60.30:FF:000037">
    <property type="entry name" value="Ovomucoid"/>
    <property type="match status" value="1"/>
</dbReference>
<dbReference type="Gene3D" id="3.30.60.30">
    <property type="match status" value="1"/>
</dbReference>
<dbReference type="InterPro" id="IPR051597">
    <property type="entry name" value="Bifunctional_prot_inhibitor"/>
</dbReference>
<dbReference type="InterPro" id="IPR002350">
    <property type="entry name" value="Kazal_dom"/>
</dbReference>
<dbReference type="InterPro" id="IPR036058">
    <property type="entry name" value="Kazal_dom_sf"/>
</dbReference>
<dbReference type="PANTHER" id="PTHR47729:SF1">
    <property type="entry name" value="OVOMUCOID-LIKE-RELATED"/>
    <property type="match status" value="1"/>
</dbReference>
<dbReference type="PANTHER" id="PTHR47729">
    <property type="entry name" value="SERINE PEPTIDASE INHIBITOR, KAZAL TYPE 2, TANDEM DUPLICATE 1-RELATED"/>
    <property type="match status" value="1"/>
</dbReference>
<dbReference type="Pfam" id="PF00050">
    <property type="entry name" value="Kazal_1"/>
    <property type="match status" value="1"/>
</dbReference>
<dbReference type="SMART" id="SM00280">
    <property type="entry name" value="KAZAL"/>
    <property type="match status" value="1"/>
</dbReference>
<dbReference type="SUPFAM" id="SSF100895">
    <property type="entry name" value="Kazal-type serine protease inhibitors"/>
    <property type="match status" value="1"/>
</dbReference>
<dbReference type="PROSITE" id="PS00282">
    <property type="entry name" value="KAZAL_1"/>
    <property type="match status" value="1"/>
</dbReference>
<dbReference type="PROSITE" id="PS51465">
    <property type="entry name" value="KAZAL_2"/>
    <property type="match status" value="1"/>
</dbReference>
<keyword id="KW-0903">Direct protein sequencing</keyword>
<keyword id="KW-1015">Disulfide bond</keyword>
<keyword id="KW-0325">Glycoprotein</keyword>
<keyword id="KW-0646">Protease inhibitor</keyword>
<keyword id="KW-0677">Repeat</keyword>
<keyword id="KW-0964">Secreted</keyword>
<keyword id="KW-0722">Serine protease inhibitor</keyword>
<organism>
    <name type="scientific">Turnix sylvaticus</name>
    <name type="common">Common buttonquail</name>
    <name type="synonym">Tetrao sylvaticus</name>
    <dbReference type="NCBI Taxonomy" id="9248"/>
    <lineage>
        <taxon>Eukaryota</taxon>
        <taxon>Metazoa</taxon>
        <taxon>Chordata</taxon>
        <taxon>Craniata</taxon>
        <taxon>Vertebrata</taxon>
        <taxon>Euteleostomi</taxon>
        <taxon>Archelosauria</taxon>
        <taxon>Archosauria</taxon>
        <taxon>Dinosauria</taxon>
        <taxon>Saurischia</taxon>
        <taxon>Theropoda</taxon>
        <taxon>Coelurosauria</taxon>
        <taxon>Aves</taxon>
        <taxon>Neognathae</taxon>
        <taxon>Neoaves</taxon>
        <taxon>Charadriiformes</taxon>
        <taxon>Turnicidae</taxon>
        <taxon>Turnix</taxon>
    </lineage>
</organism>
<name>IOVO_TURSY</name>
<proteinExistence type="evidence at protein level"/>
<feature type="chain" id="PRO_0000073192" description="Ovomucoid">
    <location>
        <begin position="1" status="less than"/>
        <end position="53" status="greater than"/>
    </location>
</feature>
<feature type="domain" description="Kazal-like" evidence="1">
    <location>
        <begin position="3"/>
        <end position="53"/>
    </location>
</feature>
<feature type="site" description="Reactive bond 3">
    <location>
        <begin position="15"/>
        <end position="16"/>
    </location>
</feature>
<feature type="glycosylation site" description="N-linked (GlcNAc...) asparagine" evidence="2">
    <location>
        <position position="42"/>
    </location>
</feature>
<feature type="disulfide bond">
    <location>
        <begin position="5"/>
        <end position="35"/>
    </location>
</feature>
<feature type="disulfide bond">
    <location>
        <begin position="13"/>
        <end position="32"/>
    </location>
</feature>
<feature type="disulfide bond">
    <location>
        <begin position="21"/>
        <end position="53"/>
    </location>
</feature>
<feature type="non-terminal residue">
    <location>
        <position position="1"/>
    </location>
</feature>
<feature type="non-terminal residue">
    <location>
        <position position="53"/>
    </location>
</feature>
<protein>
    <recommendedName>
        <fullName>Ovomucoid</fullName>
    </recommendedName>
</protein>